<dbReference type="EMBL" id="X87759">
    <property type="protein sequence ID" value="CAA61033.1"/>
    <property type="molecule type" value="mRNA"/>
</dbReference>
<dbReference type="PIR" id="JC4704">
    <property type="entry name" value="S55513"/>
</dbReference>
<dbReference type="SMR" id="Q91315"/>
<dbReference type="GO" id="GO:0005212">
    <property type="term" value="F:structural constituent of eye lens"/>
    <property type="evidence" value="ECO:0007669"/>
    <property type="project" value="UniProtKB-KW"/>
</dbReference>
<dbReference type="GO" id="GO:0002088">
    <property type="term" value="P:lens development in camera-type eye"/>
    <property type="evidence" value="ECO:0007669"/>
    <property type="project" value="TreeGrafter"/>
</dbReference>
<dbReference type="GO" id="GO:0007601">
    <property type="term" value="P:visual perception"/>
    <property type="evidence" value="ECO:0007669"/>
    <property type="project" value="TreeGrafter"/>
</dbReference>
<dbReference type="FunFam" id="2.60.20.10:FF:000004">
    <property type="entry name" value="Crystallin beta A4"/>
    <property type="match status" value="1"/>
</dbReference>
<dbReference type="FunFam" id="2.60.20.10:FF:000002">
    <property type="entry name" value="Crystallin, beta B2"/>
    <property type="match status" value="1"/>
</dbReference>
<dbReference type="Gene3D" id="2.60.20.10">
    <property type="entry name" value="Crystallins"/>
    <property type="match status" value="2"/>
</dbReference>
<dbReference type="InterPro" id="IPR050252">
    <property type="entry name" value="Beta/Gamma-Crystallin"/>
</dbReference>
<dbReference type="InterPro" id="IPR001064">
    <property type="entry name" value="Beta/gamma_crystallin"/>
</dbReference>
<dbReference type="InterPro" id="IPR011024">
    <property type="entry name" value="G_crystallin-like"/>
</dbReference>
<dbReference type="PANTHER" id="PTHR11818:SF8">
    <property type="entry name" value="BETA-CRYSTALLIN A3"/>
    <property type="match status" value="1"/>
</dbReference>
<dbReference type="PANTHER" id="PTHR11818">
    <property type="entry name" value="BETA/GAMMA CRYSTALLIN"/>
    <property type="match status" value="1"/>
</dbReference>
<dbReference type="Pfam" id="PF00030">
    <property type="entry name" value="Crystall"/>
    <property type="match status" value="2"/>
</dbReference>
<dbReference type="PRINTS" id="PR01367">
    <property type="entry name" value="BGCRYSTALLIN"/>
</dbReference>
<dbReference type="SMART" id="SM00247">
    <property type="entry name" value="XTALbg"/>
    <property type="match status" value="2"/>
</dbReference>
<dbReference type="SUPFAM" id="SSF49695">
    <property type="entry name" value="gamma-Crystallin-like"/>
    <property type="match status" value="1"/>
</dbReference>
<dbReference type="PROSITE" id="PS50915">
    <property type="entry name" value="CRYSTALLIN_BETA_GAMMA"/>
    <property type="match status" value="4"/>
</dbReference>
<comment type="function">
    <text>Crystallins are the dominant structural components of the vertebrate eye lens.</text>
</comment>
<comment type="subunit">
    <text evidence="1">Homo/heterodimer, or complexes of higher-order. The structure of beta-crystallin oligomers seems to be stabilized through interactions between the N-terminal arms (By similarity).</text>
</comment>
<comment type="domain">
    <text>Has a two-domain beta-structure, folded into four very similar Greek key motifs.</text>
</comment>
<comment type="PTM">
    <text>The N-terminus is blocked.</text>
</comment>
<comment type="similarity">
    <text evidence="3">Belongs to the beta/gamma-crystallin family.</text>
</comment>
<organism>
    <name type="scientific">Aquarana catesbeiana</name>
    <name type="common">American bullfrog</name>
    <name type="synonym">Rana catesbeiana</name>
    <dbReference type="NCBI Taxonomy" id="8400"/>
    <lineage>
        <taxon>Eukaryota</taxon>
        <taxon>Metazoa</taxon>
        <taxon>Chordata</taxon>
        <taxon>Craniata</taxon>
        <taxon>Vertebrata</taxon>
        <taxon>Euteleostomi</taxon>
        <taxon>Amphibia</taxon>
        <taxon>Batrachia</taxon>
        <taxon>Anura</taxon>
        <taxon>Neobatrachia</taxon>
        <taxon>Ranoidea</taxon>
        <taxon>Ranidae</taxon>
        <taxon>Aquarana</taxon>
    </lineage>
</organism>
<evidence type="ECO:0000250" key="1"/>
<evidence type="ECO:0000255" key="2">
    <source>
        <dbReference type="PROSITE-ProRule" id="PRU00028"/>
    </source>
</evidence>
<evidence type="ECO:0000305" key="3"/>
<keyword id="KW-0273">Eye lens protein</keyword>
<keyword id="KW-0677">Repeat</keyword>
<name>CRB11_AQUCT</name>
<protein>
    <recommendedName>
        <fullName>Beta-crystallin A1-1</fullName>
    </recommendedName>
</protein>
<feature type="chain" id="PRO_0000057535" description="Beta-crystallin A1-1">
    <location>
        <begin position="1"/>
        <end position="198"/>
    </location>
</feature>
<feature type="domain" description="Beta/gamma crystallin 'Greek key' 1" evidence="2">
    <location>
        <begin position="14"/>
        <end position="53"/>
    </location>
</feature>
<feature type="domain" description="Beta/gamma crystallin 'Greek key' 2" evidence="2">
    <location>
        <begin position="54"/>
        <end position="100"/>
    </location>
</feature>
<feature type="domain" description="Beta/gamma crystallin 'Greek key' 3" evidence="2">
    <location>
        <begin position="107"/>
        <end position="148"/>
    </location>
</feature>
<feature type="domain" description="Beta/gamma crystallin 'Greek key' 4" evidence="2">
    <location>
        <begin position="149"/>
        <end position="197"/>
    </location>
</feature>
<feature type="region of interest" description="N-terminal arm">
    <location>
        <begin position="1"/>
        <end position="13"/>
    </location>
</feature>
<feature type="region of interest" description="Connecting peptide">
    <location>
        <begin position="101"/>
        <end position="106"/>
    </location>
</feature>
<reference key="1">
    <citation type="journal article" date="1996" name="Biochem. Biophys. Res. Commun.">
        <title>Sequence analysis of four acidic beta-crystallin subunits of amphibian lenses: phylogenetic comparison between beta- and gamma-crystallins.</title>
        <authorList>
            <person name="Lu S.-F."/>
            <person name="Pan F.-M."/>
            <person name="Chiou S.-H."/>
        </authorList>
    </citation>
    <scope>NUCLEOTIDE SEQUENCE [MRNA]</scope>
    <source>
        <tissue>Lens</tissue>
    </source>
</reference>
<accession>Q91315</accession>
<proteinExistence type="evidence at transcript level"/>
<sequence length="198" mass="23236">MAQINPLPVPLGPWKITVYDQENFQGKRMEFTSSCTNIMECGFDNIRSLKVECGAWIGYEHTSFCGQQFVLERGEYPPWDAWSATNAYHIERLMSFRPICSANHKESKLVIFEKENFIGRQWELRDDYPSLQAMGWGNNEVGSMKVQCGAWVCYQYPGYRGYQYILESDHHGGEYKHWREWGSHAQTFQIQSIRRIQQ</sequence>